<keyword id="KW-0479">Metal-binding</keyword>
<keyword id="KW-1185">Reference proteome</keyword>
<keyword id="KW-0687">Ribonucleoprotein</keyword>
<keyword id="KW-0689">Ribosomal protein</keyword>
<keyword id="KW-0694">RNA-binding</keyword>
<keyword id="KW-0699">rRNA-binding</keyword>
<keyword id="KW-0862">Zinc</keyword>
<reference key="1">
    <citation type="journal article" date="2003" name="DNA Res.">
        <title>Complete genome structure of Gloeobacter violaceus PCC 7421, a cyanobacterium that lacks thylakoids.</title>
        <authorList>
            <person name="Nakamura Y."/>
            <person name="Kaneko T."/>
            <person name="Sato S."/>
            <person name="Mimuro M."/>
            <person name="Miyashita H."/>
            <person name="Tsuchiya T."/>
            <person name="Sasamoto S."/>
            <person name="Watanabe A."/>
            <person name="Kawashima K."/>
            <person name="Kishida Y."/>
            <person name="Kiyokawa C."/>
            <person name="Kohara M."/>
            <person name="Matsumoto M."/>
            <person name="Matsuno A."/>
            <person name="Nakazaki N."/>
            <person name="Shimpo S."/>
            <person name="Takeuchi C."/>
            <person name="Yamada M."/>
            <person name="Tabata S."/>
        </authorList>
    </citation>
    <scope>NUCLEOTIDE SEQUENCE [LARGE SCALE GENOMIC DNA]</scope>
    <source>
        <strain>ATCC 29082 / PCC 7421</strain>
    </source>
</reference>
<sequence length="74" mass="8339">MPKAGIHPRYEEARIVCGCGAIYETRSTKPGVTNVEICANCHPFFTGQQKIVDAEGRVDRFLKKYGNVQPRTKR</sequence>
<protein>
    <recommendedName>
        <fullName evidence="1">Large ribosomal subunit protein bL31</fullName>
    </recommendedName>
    <alternativeName>
        <fullName evidence="2">50S ribosomal protein L31</fullName>
    </alternativeName>
</protein>
<feature type="chain" id="PRO_0000173110" description="Large ribosomal subunit protein bL31">
    <location>
        <begin position="1"/>
        <end position="74"/>
    </location>
</feature>
<feature type="binding site" evidence="1">
    <location>
        <position position="17"/>
    </location>
    <ligand>
        <name>Zn(2+)</name>
        <dbReference type="ChEBI" id="CHEBI:29105"/>
    </ligand>
</feature>
<feature type="binding site" evidence="1">
    <location>
        <position position="19"/>
    </location>
    <ligand>
        <name>Zn(2+)</name>
        <dbReference type="ChEBI" id="CHEBI:29105"/>
    </ligand>
</feature>
<feature type="binding site" evidence="1">
    <location>
        <position position="38"/>
    </location>
    <ligand>
        <name>Zn(2+)</name>
        <dbReference type="ChEBI" id="CHEBI:29105"/>
    </ligand>
</feature>
<feature type="binding site" evidence="1">
    <location>
        <position position="41"/>
    </location>
    <ligand>
        <name>Zn(2+)</name>
        <dbReference type="ChEBI" id="CHEBI:29105"/>
    </ligand>
</feature>
<proteinExistence type="inferred from homology"/>
<accession>Q7ND16</accession>
<name>RL31_GLOVI</name>
<organism>
    <name type="scientific">Gloeobacter violaceus (strain ATCC 29082 / PCC 7421)</name>
    <dbReference type="NCBI Taxonomy" id="251221"/>
    <lineage>
        <taxon>Bacteria</taxon>
        <taxon>Bacillati</taxon>
        <taxon>Cyanobacteriota</taxon>
        <taxon>Cyanophyceae</taxon>
        <taxon>Gloeobacterales</taxon>
        <taxon>Gloeobacteraceae</taxon>
        <taxon>Gloeobacter</taxon>
    </lineage>
</organism>
<gene>
    <name evidence="1" type="primary">rpmE</name>
    <name evidence="1" type="synonym">rpl31</name>
    <name type="ordered locus">gsr4420</name>
</gene>
<dbReference type="EMBL" id="BA000045">
    <property type="protein sequence ID" value="BAC92361.1"/>
    <property type="molecule type" value="Genomic_DNA"/>
</dbReference>
<dbReference type="RefSeq" id="NP_927366.1">
    <property type="nucleotide sequence ID" value="NC_005125.1"/>
</dbReference>
<dbReference type="RefSeq" id="WP_011144403.1">
    <property type="nucleotide sequence ID" value="NC_005125.1"/>
</dbReference>
<dbReference type="SMR" id="Q7ND16"/>
<dbReference type="FunCoup" id="Q7ND16">
    <property type="interactions" value="83"/>
</dbReference>
<dbReference type="STRING" id="251221.gene:10761939"/>
<dbReference type="EnsemblBacteria" id="BAC92361">
    <property type="protein sequence ID" value="BAC92361"/>
    <property type="gene ID" value="BAC92361"/>
</dbReference>
<dbReference type="KEGG" id="gvi:gsr4420"/>
<dbReference type="PATRIC" id="fig|251221.4.peg.4450"/>
<dbReference type="eggNOG" id="COG0254">
    <property type="taxonomic scope" value="Bacteria"/>
</dbReference>
<dbReference type="HOGENOM" id="CLU_114306_4_0_3"/>
<dbReference type="InParanoid" id="Q7ND16"/>
<dbReference type="OrthoDB" id="9803251at2"/>
<dbReference type="PhylomeDB" id="Q7ND16"/>
<dbReference type="Proteomes" id="UP000000557">
    <property type="component" value="Chromosome"/>
</dbReference>
<dbReference type="GO" id="GO:1990904">
    <property type="term" value="C:ribonucleoprotein complex"/>
    <property type="evidence" value="ECO:0007669"/>
    <property type="project" value="UniProtKB-KW"/>
</dbReference>
<dbReference type="GO" id="GO:0005840">
    <property type="term" value="C:ribosome"/>
    <property type="evidence" value="ECO:0007669"/>
    <property type="project" value="UniProtKB-KW"/>
</dbReference>
<dbReference type="GO" id="GO:0046872">
    <property type="term" value="F:metal ion binding"/>
    <property type="evidence" value="ECO:0007669"/>
    <property type="project" value="UniProtKB-KW"/>
</dbReference>
<dbReference type="GO" id="GO:0019843">
    <property type="term" value="F:rRNA binding"/>
    <property type="evidence" value="ECO:0007669"/>
    <property type="project" value="UniProtKB-KW"/>
</dbReference>
<dbReference type="GO" id="GO:0003735">
    <property type="term" value="F:structural constituent of ribosome"/>
    <property type="evidence" value="ECO:0007669"/>
    <property type="project" value="InterPro"/>
</dbReference>
<dbReference type="GO" id="GO:0006412">
    <property type="term" value="P:translation"/>
    <property type="evidence" value="ECO:0007669"/>
    <property type="project" value="UniProtKB-UniRule"/>
</dbReference>
<dbReference type="Gene3D" id="4.10.830.30">
    <property type="entry name" value="Ribosomal protein L31"/>
    <property type="match status" value="1"/>
</dbReference>
<dbReference type="HAMAP" id="MF_00501">
    <property type="entry name" value="Ribosomal_bL31_1"/>
    <property type="match status" value="1"/>
</dbReference>
<dbReference type="InterPro" id="IPR034704">
    <property type="entry name" value="Ribosomal_bL28/bL31-like_sf"/>
</dbReference>
<dbReference type="InterPro" id="IPR002150">
    <property type="entry name" value="Ribosomal_bL31"/>
</dbReference>
<dbReference type="InterPro" id="IPR027491">
    <property type="entry name" value="Ribosomal_bL31_A"/>
</dbReference>
<dbReference type="InterPro" id="IPR042105">
    <property type="entry name" value="Ribosomal_bL31_sf"/>
</dbReference>
<dbReference type="NCBIfam" id="TIGR00105">
    <property type="entry name" value="L31"/>
    <property type="match status" value="1"/>
</dbReference>
<dbReference type="NCBIfam" id="NF000612">
    <property type="entry name" value="PRK00019.1"/>
    <property type="match status" value="1"/>
</dbReference>
<dbReference type="PANTHER" id="PTHR33280">
    <property type="entry name" value="50S RIBOSOMAL PROTEIN L31, CHLOROPLASTIC"/>
    <property type="match status" value="1"/>
</dbReference>
<dbReference type="PANTHER" id="PTHR33280:SF1">
    <property type="entry name" value="LARGE RIBOSOMAL SUBUNIT PROTEIN BL31C"/>
    <property type="match status" value="1"/>
</dbReference>
<dbReference type="Pfam" id="PF01197">
    <property type="entry name" value="Ribosomal_L31"/>
    <property type="match status" value="1"/>
</dbReference>
<dbReference type="PRINTS" id="PR01249">
    <property type="entry name" value="RIBOSOMALL31"/>
</dbReference>
<dbReference type="SUPFAM" id="SSF143800">
    <property type="entry name" value="L28p-like"/>
    <property type="match status" value="1"/>
</dbReference>
<dbReference type="PROSITE" id="PS01143">
    <property type="entry name" value="RIBOSOMAL_L31"/>
    <property type="match status" value="1"/>
</dbReference>
<evidence type="ECO:0000255" key="1">
    <source>
        <dbReference type="HAMAP-Rule" id="MF_00501"/>
    </source>
</evidence>
<evidence type="ECO:0000305" key="2"/>
<comment type="function">
    <text evidence="1">Binds the 23S rRNA.</text>
</comment>
<comment type="cofactor">
    <cofactor evidence="1">
        <name>Zn(2+)</name>
        <dbReference type="ChEBI" id="CHEBI:29105"/>
    </cofactor>
    <text evidence="1">Binds 1 zinc ion per subunit.</text>
</comment>
<comment type="subunit">
    <text evidence="1">Part of the 50S ribosomal subunit.</text>
</comment>
<comment type="similarity">
    <text evidence="1">Belongs to the bacterial ribosomal protein bL31 family. Type A subfamily.</text>
</comment>